<comment type="function">
    <text evidence="1">ATP-dependent RNA helicase. Involved in pre-mRNA splicing as component of the spliceosome. Core component of the splicing-dependent multiprotein exon junction complex (EJC) deposited at splice junctions on mRNAs. The EJC is a dynamic structure consisting of core proteins and several peripheral nuclear and cytoplasmic associated factors that join the complex only transiently either during EJC assembly or during subsequent mRNA metabolism. The EJC marks the position of the exon-exon junction in the mature mRNA for the gene expression machinery and the core components remain bound to spliced mRNAs throughout all stages of mRNA metabolism thereby influencing downstream processes including nuclear mRNA export, subcellular mRNA localization, translation efficiency and nonsense-mediated mRNA decay (NMD). Its RNA-dependent ATPase and RNA-helicase activities are induced by CASC3, but abolished in presence of the MAGOH-RBM8A heterodimer, thereby trapping the ATP-bound EJC core onto spliced mRNA in a stable conformation. The inhibition of ATPase activity by the MAGOH-RBM8A heterodimer increases the RNA-binding affinity of the EJC. Involved in translational enhancement of spliced mRNAs after formation of the 80S ribosome complex. Binds spliced mRNA in sequence-independent manner, 20-24 nucleotides upstream of mRNA exon-exon junctions. Shows higher affinity for single-stranded RNA in an ATP-bound core EJC complex than after the ATP is hydrolyzed. Involved in the splicing modulation of BCL2L1/Bcl-X (and probably other apoptotic genes); specifically inhibits formation of proapoptotic isoforms; the function is different from the established EJC assembly. Involved in craniofacial development.</text>
</comment>
<comment type="catalytic activity">
    <reaction evidence="1">
        <text>ATP + H2O = ADP + phosphate + H(+)</text>
        <dbReference type="Rhea" id="RHEA:13065"/>
        <dbReference type="ChEBI" id="CHEBI:15377"/>
        <dbReference type="ChEBI" id="CHEBI:15378"/>
        <dbReference type="ChEBI" id="CHEBI:30616"/>
        <dbReference type="ChEBI" id="CHEBI:43474"/>
        <dbReference type="ChEBI" id="CHEBI:456216"/>
        <dbReference type="EC" id="3.6.4.13"/>
    </reaction>
</comment>
<comment type="subunit">
    <text evidence="1">Identified in the spliceosome C complex. Part of the mRNA splicing-dependent exon junction complex (EJC) complex; the core complex contains CASC3, EIF4A3, MAGOH and RBM8A. Component of the ALYREF/THOC4-EJC-RNA complex; in the complex interacts with MAGOH, RBM8A and THOC4 (via the WXHD motif); these interactions are likely specific to RNA-bound EJC (By similarity). May interact with NOM1. Interacts with POLDIP3. Interacts with CWC22 and PRPF19 in an RNA-independent manner. Direct interaction with CWC22 is mediated by the helicase C-terminal domain. Full interaction with CWC22 occurs only when EIF4A3 is not part of the EJC and prevents EIF4A3 binding to RNA. Interacts with NCBP3.</text>
</comment>
<comment type="subcellular location">
    <subcellularLocation>
        <location evidence="2">Nucleus</location>
    </subcellularLocation>
    <subcellularLocation>
        <location evidence="1">Nucleus speckle</location>
    </subcellularLocation>
    <subcellularLocation>
        <location evidence="2">Cytoplasm</location>
    </subcellularLocation>
    <text evidence="2">Nucleocytoplasmic shuttling protein. Travels to the cytoplasm as part of the exon junction complex (EJC) bound to mRNA.</text>
</comment>
<comment type="similarity">
    <text evidence="6">Belongs to the DEAD box helicase family. eIF4A subfamily.</text>
</comment>
<name>IF4A3_CHICK</name>
<proteinExistence type="evidence at transcript level"/>
<reference key="1">
    <citation type="journal article" date="2005" name="Genome Biol.">
        <title>Full-length cDNAs from chicken bursal lymphocytes to facilitate gene function analysis.</title>
        <authorList>
            <person name="Caldwell R.B."/>
            <person name="Kierzek A.M."/>
            <person name="Arakawa H."/>
            <person name="Bezzubov Y."/>
            <person name="Zaim J."/>
            <person name="Fiedler P."/>
            <person name="Kutter S."/>
            <person name="Blagodatski A."/>
            <person name="Kostovska D."/>
            <person name="Koter M."/>
            <person name="Plachy J."/>
            <person name="Carninci P."/>
            <person name="Hayashizaki Y."/>
            <person name="Buerstedde J.-M."/>
        </authorList>
    </citation>
    <scope>NUCLEOTIDE SEQUENCE [LARGE SCALE MRNA]</scope>
    <source>
        <strain>CB</strain>
        <tissue>Bursa of Fabricius</tissue>
    </source>
</reference>
<accession>Q5ZM36</accession>
<organism>
    <name type="scientific">Gallus gallus</name>
    <name type="common">Chicken</name>
    <dbReference type="NCBI Taxonomy" id="9031"/>
    <lineage>
        <taxon>Eukaryota</taxon>
        <taxon>Metazoa</taxon>
        <taxon>Chordata</taxon>
        <taxon>Craniata</taxon>
        <taxon>Vertebrata</taxon>
        <taxon>Euteleostomi</taxon>
        <taxon>Archelosauria</taxon>
        <taxon>Archosauria</taxon>
        <taxon>Dinosauria</taxon>
        <taxon>Saurischia</taxon>
        <taxon>Theropoda</taxon>
        <taxon>Coelurosauria</taxon>
        <taxon>Aves</taxon>
        <taxon>Neognathae</taxon>
        <taxon>Galloanserae</taxon>
        <taxon>Galliformes</taxon>
        <taxon>Phasianidae</taxon>
        <taxon>Phasianinae</taxon>
        <taxon>Gallus</taxon>
    </lineage>
</organism>
<protein>
    <recommendedName>
        <fullName>Eukaryotic initiation factor 4A-III</fullName>
        <shortName>eIF-4A-III</shortName>
        <shortName>eIF4A-III</shortName>
        <ecNumber evidence="1">3.6.4.13</ecNumber>
    </recommendedName>
    <alternativeName>
        <fullName>ATP-dependent RNA helicase DDX48</fullName>
    </alternativeName>
    <alternativeName>
        <fullName>ATP-dependent RNA helicase eIF4A-3</fullName>
    </alternativeName>
    <alternativeName>
        <fullName>DEAD box protein 48</fullName>
    </alternativeName>
    <alternativeName>
        <fullName>Eukaryotic translation initiation factor 4A isoform 3</fullName>
    </alternativeName>
</protein>
<sequence length="412" mass="46816">MSGSAGSGGTTGSARKRIMKEEDMTKVEFETSEEVDVTPTFDTMGLREDLLRGIYAYGFEKPSAIQQRAIKQIIKGRDVIAQSQSGTGKTATFSISVLQCLDIQVRETQALILAPTRELAVQIQKGLLALGDYMNVQCHACIGGTNVGEDIRKLDYGQHVVAGTPGRVFDMIRRRSLRTRAIKMLVLDEADEMLNKGFKEQIYDVYRYLPPATQVVLISATLPHEILEMTNKFMTDPIRILVKRDELTLEGIKQFFVAVEREEWKFDTLCDLYDTLTITQAVIFCNTKRKVDWLTEKMREANFTVSSMHGDMPQKERESIMKEFRSGASRVLISTDVWARGLDVPQVSLIINYDLPNNRELYIHRIGRSGRYGRKGVAINFVKNDDIRILRDIEQYYSTQIDEMPMNVADLI</sequence>
<keyword id="KW-0067">ATP-binding</keyword>
<keyword id="KW-0963">Cytoplasm</keyword>
<keyword id="KW-0347">Helicase</keyword>
<keyword id="KW-0378">Hydrolase</keyword>
<keyword id="KW-0507">mRNA processing</keyword>
<keyword id="KW-0508">mRNA splicing</keyword>
<keyword id="KW-0509">mRNA transport</keyword>
<keyword id="KW-0866">Nonsense-mediated mRNA decay</keyword>
<keyword id="KW-0547">Nucleotide-binding</keyword>
<keyword id="KW-0539">Nucleus</keyword>
<keyword id="KW-1185">Reference proteome</keyword>
<keyword id="KW-0694">RNA-binding</keyword>
<keyword id="KW-0747">Spliceosome</keyword>
<keyword id="KW-0810">Translation regulation</keyword>
<keyword id="KW-0813">Transport</keyword>
<gene>
    <name type="primary">EIF4A3</name>
    <name type="synonym">DDX48</name>
    <name type="ORF">RCJMB04_3e17</name>
</gene>
<feature type="chain" id="PRO_0000379478" description="Eukaryotic initiation factor 4A-III">
    <location>
        <begin position="1"/>
        <end position="412"/>
    </location>
</feature>
<feature type="domain" description="Helicase ATP-binding" evidence="3">
    <location>
        <begin position="70"/>
        <end position="240"/>
    </location>
</feature>
<feature type="domain" description="Helicase C-terminal" evidence="4">
    <location>
        <begin position="251"/>
        <end position="412"/>
    </location>
</feature>
<feature type="region of interest" description="Disordered" evidence="5">
    <location>
        <begin position="1"/>
        <end position="20"/>
    </location>
</feature>
<feature type="short sequence motif" description="Q motif">
    <location>
        <begin position="39"/>
        <end position="67"/>
    </location>
</feature>
<feature type="short sequence motif" description="DEAD box" evidence="6">
    <location>
        <begin position="188"/>
        <end position="191"/>
    </location>
</feature>
<feature type="compositionally biased region" description="Gly residues" evidence="5">
    <location>
        <begin position="1"/>
        <end position="11"/>
    </location>
</feature>
<feature type="binding site" evidence="1">
    <location>
        <position position="61"/>
    </location>
    <ligand>
        <name>ATP</name>
        <dbReference type="ChEBI" id="CHEBI:30616"/>
    </ligand>
</feature>
<feature type="binding site" evidence="1">
    <location>
        <position position="66"/>
    </location>
    <ligand>
        <name>ATP</name>
        <dbReference type="ChEBI" id="CHEBI:30616"/>
    </ligand>
</feature>
<feature type="binding site" evidence="1">
    <location>
        <begin position="86"/>
        <end position="91"/>
    </location>
    <ligand>
        <name>ATP</name>
        <dbReference type="ChEBI" id="CHEBI:30616"/>
    </ligand>
</feature>
<feature type="binding site" evidence="1">
    <location>
        <position position="343"/>
    </location>
    <ligand>
        <name>ATP</name>
        <dbReference type="ChEBI" id="CHEBI:30616"/>
    </ligand>
</feature>
<feature type="binding site" evidence="1">
    <location>
        <begin position="368"/>
        <end position="372"/>
    </location>
    <ligand>
        <name>ATP</name>
        <dbReference type="ChEBI" id="CHEBI:30616"/>
    </ligand>
</feature>
<dbReference type="EC" id="3.6.4.13" evidence="1"/>
<dbReference type="EMBL" id="AJ719548">
    <property type="protein sequence ID" value="CAG31207.1"/>
    <property type="molecule type" value="mRNA"/>
</dbReference>
<dbReference type="RefSeq" id="NP_001025820.1">
    <property type="nucleotide sequence ID" value="NM_001030649.2"/>
</dbReference>
<dbReference type="SMR" id="Q5ZM36"/>
<dbReference type="FunCoup" id="Q5ZM36">
    <property type="interactions" value="2910"/>
</dbReference>
<dbReference type="STRING" id="9031.ENSGALP00000038179"/>
<dbReference type="GlyGen" id="Q5ZM36">
    <property type="glycosylation" value="1 site"/>
</dbReference>
<dbReference type="PaxDb" id="9031-ENSGALP00000038179"/>
<dbReference type="Ensembl" id="ENSGALT00010040955.1">
    <property type="protein sequence ID" value="ENSGALP00010023919.1"/>
    <property type="gene ID" value="ENSGALG00010016961.1"/>
</dbReference>
<dbReference type="GeneID" id="416704"/>
<dbReference type="KEGG" id="gga:416704"/>
<dbReference type="CTD" id="9775"/>
<dbReference type="VEuPathDB" id="HostDB:geneid_416704"/>
<dbReference type="eggNOG" id="KOG0328">
    <property type="taxonomic scope" value="Eukaryota"/>
</dbReference>
<dbReference type="GeneTree" id="ENSGT00940000155037"/>
<dbReference type="HOGENOM" id="CLU_003041_1_0_1"/>
<dbReference type="InParanoid" id="Q5ZM36"/>
<dbReference type="OMA" id="TRFHDFK"/>
<dbReference type="OrthoDB" id="10265785at2759"/>
<dbReference type="PhylomeDB" id="Q5ZM36"/>
<dbReference type="Reactome" id="R-GGA-1169408">
    <property type="pathway name" value="ISG15 antiviral mechanism"/>
</dbReference>
<dbReference type="Reactome" id="R-GGA-159236">
    <property type="pathway name" value="Transport of Mature mRNA derived from an Intron-Containing Transcript"/>
</dbReference>
<dbReference type="Reactome" id="R-GGA-429947">
    <property type="pathway name" value="Deadenylation of mRNA"/>
</dbReference>
<dbReference type="Reactome" id="R-GGA-72163">
    <property type="pathway name" value="mRNA Splicing - Major Pathway"/>
</dbReference>
<dbReference type="Reactome" id="R-GGA-72187">
    <property type="pathway name" value="mRNA 3'-end processing"/>
</dbReference>
<dbReference type="Reactome" id="R-GGA-73856">
    <property type="pathway name" value="RNA Polymerase II Transcription Termination"/>
</dbReference>
<dbReference type="Reactome" id="R-GGA-975957">
    <property type="pathway name" value="Nonsense Mediated Decay (NMD) enhanced by the Exon Junction Complex (EJC)"/>
</dbReference>
<dbReference type="PRO" id="PR:Q5ZM36"/>
<dbReference type="Proteomes" id="UP000000539">
    <property type="component" value="Chromosome 3"/>
</dbReference>
<dbReference type="Bgee" id="ENSGALG00000008530">
    <property type="expression patterns" value="Expressed in colon and 12 other cell types or tissues"/>
</dbReference>
<dbReference type="GO" id="GO:0071013">
    <property type="term" value="C:catalytic step 2 spliceosome"/>
    <property type="evidence" value="ECO:0000318"/>
    <property type="project" value="GO_Central"/>
</dbReference>
<dbReference type="GO" id="GO:0005737">
    <property type="term" value="C:cytoplasm"/>
    <property type="evidence" value="ECO:0007669"/>
    <property type="project" value="UniProtKB-SubCell"/>
</dbReference>
<dbReference type="GO" id="GO:0016607">
    <property type="term" value="C:nuclear speck"/>
    <property type="evidence" value="ECO:0007669"/>
    <property type="project" value="UniProtKB-SubCell"/>
</dbReference>
<dbReference type="GO" id="GO:0005730">
    <property type="term" value="C:nucleolus"/>
    <property type="evidence" value="ECO:0000318"/>
    <property type="project" value="GO_Central"/>
</dbReference>
<dbReference type="GO" id="GO:0005634">
    <property type="term" value="C:nucleus"/>
    <property type="evidence" value="ECO:0000250"/>
    <property type="project" value="UniProtKB"/>
</dbReference>
<dbReference type="GO" id="GO:0071006">
    <property type="term" value="C:U2-type catalytic step 1 spliceosome"/>
    <property type="evidence" value="ECO:0000250"/>
    <property type="project" value="UniProtKB"/>
</dbReference>
<dbReference type="GO" id="GO:0005524">
    <property type="term" value="F:ATP binding"/>
    <property type="evidence" value="ECO:0007669"/>
    <property type="project" value="UniProtKB-KW"/>
</dbReference>
<dbReference type="GO" id="GO:0016887">
    <property type="term" value="F:ATP hydrolysis activity"/>
    <property type="evidence" value="ECO:0007669"/>
    <property type="project" value="RHEA"/>
</dbReference>
<dbReference type="GO" id="GO:0003729">
    <property type="term" value="F:mRNA binding"/>
    <property type="evidence" value="ECO:0000318"/>
    <property type="project" value="GO_Central"/>
</dbReference>
<dbReference type="GO" id="GO:0003724">
    <property type="term" value="F:RNA helicase activity"/>
    <property type="evidence" value="ECO:0000318"/>
    <property type="project" value="GO_Central"/>
</dbReference>
<dbReference type="GO" id="GO:0000398">
    <property type="term" value="P:mRNA splicing, via spliceosome"/>
    <property type="evidence" value="ECO:0000250"/>
    <property type="project" value="UniProtKB"/>
</dbReference>
<dbReference type="GO" id="GO:0051028">
    <property type="term" value="P:mRNA transport"/>
    <property type="evidence" value="ECO:0007669"/>
    <property type="project" value="UniProtKB-KW"/>
</dbReference>
<dbReference type="GO" id="GO:0000184">
    <property type="term" value="P:nuclear-transcribed mRNA catabolic process, nonsense-mediated decay"/>
    <property type="evidence" value="ECO:0007669"/>
    <property type="project" value="UniProtKB-KW"/>
</dbReference>
<dbReference type="GO" id="GO:0000381">
    <property type="term" value="P:regulation of alternative mRNA splicing, via spliceosome"/>
    <property type="evidence" value="ECO:0000250"/>
    <property type="project" value="UniProtKB"/>
</dbReference>
<dbReference type="GO" id="GO:0006417">
    <property type="term" value="P:regulation of translation"/>
    <property type="evidence" value="ECO:0007669"/>
    <property type="project" value="UniProtKB-KW"/>
</dbReference>
<dbReference type="CDD" id="cd18045">
    <property type="entry name" value="DEADc_EIF4AIII_DDX48"/>
    <property type="match status" value="1"/>
</dbReference>
<dbReference type="CDD" id="cd18787">
    <property type="entry name" value="SF2_C_DEAD"/>
    <property type="match status" value="1"/>
</dbReference>
<dbReference type="FunFam" id="3.40.50.300:FF:000031">
    <property type="entry name" value="Eukaryotic initiation factor 4A-III"/>
    <property type="match status" value="1"/>
</dbReference>
<dbReference type="FunFam" id="3.40.50.300:FF:000498">
    <property type="entry name" value="Eukaryotic initiation factor 4A-III"/>
    <property type="match status" value="1"/>
</dbReference>
<dbReference type="Gene3D" id="3.40.50.300">
    <property type="entry name" value="P-loop containing nucleotide triphosphate hydrolases"/>
    <property type="match status" value="2"/>
</dbReference>
<dbReference type="InterPro" id="IPR011545">
    <property type="entry name" value="DEAD/DEAH_box_helicase_dom"/>
</dbReference>
<dbReference type="InterPro" id="IPR014001">
    <property type="entry name" value="Helicase_ATP-bd"/>
</dbReference>
<dbReference type="InterPro" id="IPR001650">
    <property type="entry name" value="Helicase_C-like"/>
</dbReference>
<dbReference type="InterPro" id="IPR027417">
    <property type="entry name" value="P-loop_NTPase"/>
</dbReference>
<dbReference type="InterPro" id="IPR000629">
    <property type="entry name" value="RNA-helicase_DEAD-box_CS"/>
</dbReference>
<dbReference type="InterPro" id="IPR014014">
    <property type="entry name" value="RNA_helicase_DEAD_Q_motif"/>
</dbReference>
<dbReference type="PANTHER" id="PTHR47958">
    <property type="entry name" value="ATP-DEPENDENT RNA HELICASE DBP3"/>
    <property type="match status" value="1"/>
</dbReference>
<dbReference type="Pfam" id="PF00270">
    <property type="entry name" value="DEAD"/>
    <property type="match status" value="1"/>
</dbReference>
<dbReference type="Pfam" id="PF00271">
    <property type="entry name" value="Helicase_C"/>
    <property type="match status" value="1"/>
</dbReference>
<dbReference type="SMART" id="SM00487">
    <property type="entry name" value="DEXDc"/>
    <property type="match status" value="1"/>
</dbReference>
<dbReference type="SMART" id="SM00490">
    <property type="entry name" value="HELICc"/>
    <property type="match status" value="1"/>
</dbReference>
<dbReference type="SUPFAM" id="SSF52540">
    <property type="entry name" value="P-loop containing nucleoside triphosphate hydrolases"/>
    <property type="match status" value="1"/>
</dbReference>
<dbReference type="PROSITE" id="PS00039">
    <property type="entry name" value="DEAD_ATP_HELICASE"/>
    <property type="match status" value="1"/>
</dbReference>
<dbReference type="PROSITE" id="PS51192">
    <property type="entry name" value="HELICASE_ATP_BIND_1"/>
    <property type="match status" value="1"/>
</dbReference>
<dbReference type="PROSITE" id="PS51194">
    <property type="entry name" value="HELICASE_CTER"/>
    <property type="match status" value="1"/>
</dbReference>
<dbReference type="PROSITE" id="PS51195">
    <property type="entry name" value="Q_MOTIF"/>
    <property type="match status" value="1"/>
</dbReference>
<evidence type="ECO:0000250" key="1">
    <source>
        <dbReference type="UniProtKB" id="P38919"/>
    </source>
</evidence>
<evidence type="ECO:0000250" key="2">
    <source>
        <dbReference type="UniProtKB" id="Q3B8Q2"/>
    </source>
</evidence>
<evidence type="ECO:0000255" key="3">
    <source>
        <dbReference type="PROSITE-ProRule" id="PRU00541"/>
    </source>
</evidence>
<evidence type="ECO:0000255" key="4">
    <source>
        <dbReference type="PROSITE-ProRule" id="PRU00542"/>
    </source>
</evidence>
<evidence type="ECO:0000256" key="5">
    <source>
        <dbReference type="SAM" id="MobiDB-lite"/>
    </source>
</evidence>
<evidence type="ECO:0000305" key="6"/>